<keyword id="KW-0066">ATP synthesis</keyword>
<keyword id="KW-1003">Cell membrane</keyword>
<keyword id="KW-0138">CF(0)</keyword>
<keyword id="KW-0375">Hydrogen ion transport</keyword>
<keyword id="KW-0406">Ion transport</keyword>
<keyword id="KW-0446">Lipid-binding</keyword>
<keyword id="KW-0472">Membrane</keyword>
<keyword id="KW-1185">Reference proteome</keyword>
<keyword id="KW-0812">Transmembrane</keyword>
<keyword id="KW-1133">Transmembrane helix</keyword>
<keyword id="KW-0813">Transport</keyword>
<sequence>MLFTDYMANFLVGYFSVLSSIMPLLAETSSTGEGLKLLGAGVAIIGVAGAGIGQGAVGQGACMAIGRNPEMAPKITSTMIIAAGIAESGAIYALVVAILLIFVA</sequence>
<accession>Q6F207</accession>
<comment type="function">
    <text evidence="1">F(1)F(0) ATP synthase produces ATP from ADP in the presence of a proton or sodium gradient. F-type ATPases consist of two structural domains, F(1) containing the extramembraneous catalytic core and F(0) containing the membrane proton channel, linked together by a central stalk and a peripheral stalk. During catalysis, ATP synthesis in the catalytic domain of F(1) is coupled via a rotary mechanism of the central stalk subunits to proton translocation.</text>
</comment>
<comment type="function">
    <text evidence="1">Key component of the F(0) channel; it plays a direct role in translocation across the membrane. A homomeric c-ring of between 10-14 subunits forms the central stalk rotor element with the F(1) delta and epsilon subunits.</text>
</comment>
<comment type="subunit">
    <text evidence="1">F-type ATPases have 2 components, F(1) - the catalytic core - and F(0) - the membrane proton channel. F(1) has five subunits: alpha(3), beta(3), gamma(1), delta(1), epsilon(1). F(0) has three main subunits: a(1), b(2) and c(10-14). The alpha and beta chains form an alternating ring which encloses part of the gamma chain. F(1) is attached to F(0) by a central stalk formed by the gamma and epsilon chains, while a peripheral stalk is formed by the delta and b chains.</text>
</comment>
<comment type="subcellular location">
    <subcellularLocation>
        <location evidence="1">Cell membrane</location>
        <topology evidence="1">Multi-pass membrane protein</topology>
    </subcellularLocation>
</comment>
<comment type="similarity">
    <text evidence="1">Belongs to the ATPase C chain family.</text>
</comment>
<organism>
    <name type="scientific">Mesoplasma florum (strain ATCC 33453 / NBRC 100688 / NCTC 11704 / L1)</name>
    <name type="common">Acholeplasma florum</name>
    <dbReference type="NCBI Taxonomy" id="265311"/>
    <lineage>
        <taxon>Bacteria</taxon>
        <taxon>Bacillati</taxon>
        <taxon>Mycoplasmatota</taxon>
        <taxon>Mollicutes</taxon>
        <taxon>Entomoplasmatales</taxon>
        <taxon>Entomoplasmataceae</taxon>
        <taxon>Mesoplasma</taxon>
    </lineage>
</organism>
<dbReference type="EMBL" id="AE017263">
    <property type="protein sequence ID" value="AAT75466.1"/>
    <property type="molecule type" value="Genomic_DNA"/>
</dbReference>
<dbReference type="RefSeq" id="WP_011183007.1">
    <property type="nucleotide sequence ID" value="NC_006055.1"/>
</dbReference>
<dbReference type="RefSeq" id="YP_053350.1">
    <property type="nucleotide sequence ID" value="NC_006055.1"/>
</dbReference>
<dbReference type="SMR" id="Q6F207"/>
<dbReference type="STRING" id="265311.Mfl110"/>
<dbReference type="PaxDb" id="265311-Mfl110"/>
<dbReference type="EnsemblBacteria" id="AAT75466">
    <property type="protein sequence ID" value="AAT75466"/>
    <property type="gene ID" value="Mfl110"/>
</dbReference>
<dbReference type="GeneID" id="2897983"/>
<dbReference type="KEGG" id="mfl:Mfl110"/>
<dbReference type="PATRIC" id="fig|265311.5.peg.111"/>
<dbReference type="eggNOG" id="COG0636">
    <property type="taxonomic scope" value="Bacteria"/>
</dbReference>
<dbReference type="HOGENOM" id="CLU_148047_2_2_14"/>
<dbReference type="OrthoDB" id="9810379at2"/>
<dbReference type="Proteomes" id="UP000006647">
    <property type="component" value="Chromosome"/>
</dbReference>
<dbReference type="GO" id="GO:0005886">
    <property type="term" value="C:plasma membrane"/>
    <property type="evidence" value="ECO:0007669"/>
    <property type="project" value="UniProtKB-SubCell"/>
</dbReference>
<dbReference type="GO" id="GO:0045259">
    <property type="term" value="C:proton-transporting ATP synthase complex"/>
    <property type="evidence" value="ECO:0007669"/>
    <property type="project" value="UniProtKB-KW"/>
</dbReference>
<dbReference type="GO" id="GO:0033177">
    <property type="term" value="C:proton-transporting two-sector ATPase complex, proton-transporting domain"/>
    <property type="evidence" value="ECO:0007669"/>
    <property type="project" value="InterPro"/>
</dbReference>
<dbReference type="GO" id="GO:0008289">
    <property type="term" value="F:lipid binding"/>
    <property type="evidence" value="ECO:0007669"/>
    <property type="project" value="UniProtKB-KW"/>
</dbReference>
<dbReference type="GO" id="GO:0046933">
    <property type="term" value="F:proton-transporting ATP synthase activity, rotational mechanism"/>
    <property type="evidence" value="ECO:0007669"/>
    <property type="project" value="UniProtKB-UniRule"/>
</dbReference>
<dbReference type="CDD" id="cd18184">
    <property type="entry name" value="ATP-synt_Fo_c_NaATPase"/>
    <property type="match status" value="1"/>
</dbReference>
<dbReference type="Gene3D" id="1.20.20.10">
    <property type="entry name" value="F1F0 ATP synthase subunit C"/>
    <property type="match status" value="1"/>
</dbReference>
<dbReference type="HAMAP" id="MF_01396">
    <property type="entry name" value="ATP_synth_c_bact"/>
    <property type="match status" value="1"/>
</dbReference>
<dbReference type="InterPro" id="IPR000454">
    <property type="entry name" value="ATP_synth_F0_csu"/>
</dbReference>
<dbReference type="InterPro" id="IPR020537">
    <property type="entry name" value="ATP_synth_F0_csu_DDCD_BS"/>
</dbReference>
<dbReference type="InterPro" id="IPR038662">
    <property type="entry name" value="ATP_synth_F0_csu_sf"/>
</dbReference>
<dbReference type="InterPro" id="IPR002379">
    <property type="entry name" value="ATPase_proteolipid_c-like_dom"/>
</dbReference>
<dbReference type="InterPro" id="IPR035921">
    <property type="entry name" value="F/V-ATP_Csub_sf"/>
</dbReference>
<dbReference type="Pfam" id="PF00137">
    <property type="entry name" value="ATP-synt_C"/>
    <property type="match status" value="1"/>
</dbReference>
<dbReference type="PRINTS" id="PR00124">
    <property type="entry name" value="ATPASEC"/>
</dbReference>
<dbReference type="SUPFAM" id="SSF81333">
    <property type="entry name" value="F1F0 ATP synthase subunit C"/>
    <property type="match status" value="1"/>
</dbReference>
<dbReference type="PROSITE" id="PS00605">
    <property type="entry name" value="ATPASE_C"/>
    <property type="match status" value="1"/>
</dbReference>
<gene>
    <name evidence="1" type="primary">atpE</name>
    <name type="ordered locus">Mfl110</name>
</gene>
<proteinExistence type="inferred from homology"/>
<protein>
    <recommendedName>
        <fullName evidence="1">ATP synthase subunit c</fullName>
    </recommendedName>
    <alternativeName>
        <fullName evidence="1">ATP synthase F(0) sector subunit c</fullName>
    </alternativeName>
    <alternativeName>
        <fullName evidence="1">F-type ATPase subunit c</fullName>
        <shortName evidence="1">F-ATPase subunit c</shortName>
    </alternativeName>
    <alternativeName>
        <fullName evidence="1">Lipid-binding protein</fullName>
    </alternativeName>
</protein>
<name>ATPL_MESFL</name>
<reference key="1">
    <citation type="submission" date="2004-06" db="EMBL/GenBank/DDBJ databases">
        <authorList>
            <person name="Birren B.W."/>
            <person name="Stange-Thomann N."/>
            <person name="Hafez N."/>
            <person name="DeCaprio D."/>
            <person name="Fisher S."/>
            <person name="Butler J."/>
            <person name="Elkins T."/>
            <person name="Kodira C.D."/>
            <person name="Major J."/>
            <person name="Wang S."/>
            <person name="Nicol R."/>
            <person name="Nusbaum C."/>
        </authorList>
    </citation>
    <scope>NUCLEOTIDE SEQUENCE [LARGE SCALE GENOMIC DNA]</scope>
    <source>
        <strain>ATCC 33453 / NBRC 100688 / NCTC 11704 / L1</strain>
    </source>
</reference>
<feature type="chain" id="PRO_0000365894" description="ATP synthase subunit c">
    <location>
        <begin position="1"/>
        <end position="104"/>
    </location>
</feature>
<feature type="transmembrane region" description="Helical" evidence="1">
    <location>
        <begin position="37"/>
        <end position="57"/>
    </location>
</feature>
<feature type="transmembrane region" description="Helical" evidence="1">
    <location>
        <begin position="83"/>
        <end position="103"/>
    </location>
</feature>
<feature type="site" description="Reversibly protonated during proton transport" evidence="1">
    <location>
        <position position="87"/>
    </location>
</feature>
<evidence type="ECO:0000255" key="1">
    <source>
        <dbReference type="HAMAP-Rule" id="MF_01396"/>
    </source>
</evidence>